<feature type="chain" id="PRO_0000084020" description="Histamine N-methyltransferase">
    <location>
        <begin position="1"/>
        <end position="292"/>
    </location>
</feature>
<feature type="binding site" evidence="2">
    <location>
        <position position="28"/>
    </location>
    <ligand>
        <name>substrate</name>
    </ligand>
</feature>
<feature type="binding site" evidence="2">
    <location>
        <position position="60"/>
    </location>
    <ligand>
        <name>S-adenosyl-L-methionine</name>
        <dbReference type="ChEBI" id="CHEBI:59789"/>
    </ligand>
</feature>
<feature type="binding site" evidence="2">
    <location>
        <position position="89"/>
    </location>
    <ligand>
        <name>S-adenosyl-L-methionine</name>
        <dbReference type="ChEBI" id="CHEBI:59789"/>
    </ligand>
</feature>
<feature type="binding site" evidence="2">
    <location>
        <position position="94"/>
    </location>
    <ligand>
        <name>S-adenosyl-L-methionine</name>
        <dbReference type="ChEBI" id="CHEBI:59789"/>
    </ligand>
</feature>
<feature type="binding site" evidence="2">
    <location>
        <position position="120"/>
    </location>
    <ligand>
        <name>S-adenosyl-L-methionine</name>
        <dbReference type="ChEBI" id="CHEBI:59789"/>
    </ligand>
</feature>
<feature type="binding site" evidence="2">
    <location>
        <position position="142"/>
    </location>
    <ligand>
        <name>S-adenosyl-L-methionine</name>
        <dbReference type="ChEBI" id="CHEBI:59789"/>
    </ligand>
</feature>
<feature type="binding site" evidence="2">
    <location>
        <position position="283"/>
    </location>
    <ligand>
        <name>substrate</name>
    </ligand>
</feature>
<reference key="1">
    <citation type="journal article" date="2001" name="Jpn. J. Pharmacol.">
        <title>Guinea pig histamine N-methyltransferase: cDNA cloning and mRNA distribution.</title>
        <authorList>
            <person name="Kitanaka J."/>
            <person name="Kitanaka N."/>
            <person name="Tsujimura T."/>
            <person name="Kakihana M."/>
            <person name="Terada N."/>
            <person name="Takemura M."/>
        </authorList>
    </citation>
    <scope>NUCLEOTIDE SEQUENCE [MRNA]</scope>
    <scope>TISSUE SPECIFICITY</scope>
    <source>
        <strain>Hartley</strain>
        <tissue>Brain</tissue>
    </source>
</reference>
<comment type="function">
    <text evidence="1">Inactivates histamine by N-methylation. Plays an important role in degrading histamine and in regulating the airway response to histamine.</text>
</comment>
<comment type="catalytic activity">
    <reaction evidence="1 2">
        <text>histamine + S-adenosyl-L-methionine = N(tau)-methylhistamine + S-adenosyl-L-homocysteine + H(+)</text>
        <dbReference type="Rhea" id="RHEA:19301"/>
        <dbReference type="ChEBI" id="CHEBI:15378"/>
        <dbReference type="ChEBI" id="CHEBI:57856"/>
        <dbReference type="ChEBI" id="CHEBI:58432"/>
        <dbReference type="ChEBI" id="CHEBI:58600"/>
        <dbReference type="ChEBI" id="CHEBI:59789"/>
        <dbReference type="EC" id="2.1.1.8"/>
    </reaction>
</comment>
<comment type="subunit">
    <text evidence="1">Monomer.</text>
</comment>
<comment type="subcellular location">
    <subcellularLocation>
        <location evidence="1">Cytoplasm</location>
    </subcellularLocation>
</comment>
<comment type="tissue specificity">
    <text evidence="3">Expressed in jejunum, brain &gt; lung, spleen, stomach &gt; liver, kidney.</text>
</comment>
<comment type="similarity">
    <text evidence="2">Belongs to the class I-like SAM-binding methyltransferase superfamily. HNMT family.</text>
</comment>
<keyword id="KW-0963">Cytoplasm</keyword>
<keyword id="KW-0489">Methyltransferase</keyword>
<keyword id="KW-1185">Reference proteome</keyword>
<keyword id="KW-0949">S-adenosyl-L-methionine</keyword>
<keyword id="KW-0808">Transferase</keyword>
<accession>Q9EST2</accession>
<proteinExistence type="evidence at transcript level"/>
<sequence length="292" mass="33712">MASSMRSLFSDHGRYFEAFRRFLNNSTEYQCMREFMDKQLPGIIARIGGSKSEIKVLSIGGGAGEMDLHILSKVKAQYPGVHIINEVVEPSAEQITKYKELVAKTSNLENIKFAWHKETSSEYQNRVMEQKEIQKWDFIHMIQMLYYVDDIPATLKFFHSLLATNAKILIILVSGKSGWLKFWKKYRSRLPQNDLCQYVTSFDIIQMLDSLGIKYQCYDLLSTMDITDCFIDGNENGELLWDFLTETCNFLTTAPPDLRAEIMKDLQGPEFIVRKEGKILFDNSLSFITIEA</sequence>
<dbReference type="EC" id="2.1.1.8" evidence="1"/>
<dbReference type="EMBL" id="AB032693">
    <property type="protein sequence ID" value="BAB13758.1"/>
    <property type="molecule type" value="mRNA"/>
</dbReference>
<dbReference type="RefSeq" id="NP_001166431.1">
    <property type="nucleotide sequence ID" value="NM_001172960.2"/>
</dbReference>
<dbReference type="SMR" id="Q9EST2"/>
<dbReference type="FunCoup" id="Q9EST2">
    <property type="interactions" value="857"/>
</dbReference>
<dbReference type="STRING" id="10141.ENSCPOP00000002230"/>
<dbReference type="BindingDB" id="Q9EST2"/>
<dbReference type="ChEMBL" id="CHEMBL4485"/>
<dbReference type="Ensembl" id="ENSCPOT00000002482.3">
    <property type="protein sequence ID" value="ENSCPOP00000002230.2"/>
    <property type="gene ID" value="ENSCPOG00000002449.4"/>
</dbReference>
<dbReference type="GeneID" id="100135537"/>
<dbReference type="KEGG" id="cpoc:100135537"/>
<dbReference type="CTD" id="3176"/>
<dbReference type="VEuPathDB" id="HostDB:ENSCPOG00000002449"/>
<dbReference type="eggNOG" id="ENOG502QQJ1">
    <property type="taxonomic scope" value="Eukaryota"/>
</dbReference>
<dbReference type="GeneTree" id="ENSGT00390000002862"/>
<dbReference type="HOGENOM" id="CLU_058117_1_0_1"/>
<dbReference type="InParanoid" id="Q9EST2"/>
<dbReference type="OMA" id="KNIKFAW"/>
<dbReference type="OrthoDB" id="5984880at2759"/>
<dbReference type="TreeFam" id="TF331080"/>
<dbReference type="PRO" id="PR:Q9EST2"/>
<dbReference type="Proteomes" id="UP000005447">
    <property type="component" value="Unassembled WGS sequence"/>
</dbReference>
<dbReference type="Bgee" id="ENSCPOG00000002449">
    <property type="expression patterns" value="Expressed in hypothalamus and 12 other cell types or tissues"/>
</dbReference>
<dbReference type="GO" id="GO:0005813">
    <property type="term" value="C:centrosome"/>
    <property type="evidence" value="ECO:0007669"/>
    <property type="project" value="Ensembl"/>
</dbReference>
<dbReference type="GO" id="GO:0005737">
    <property type="term" value="C:cytoplasm"/>
    <property type="evidence" value="ECO:0000250"/>
    <property type="project" value="UniProtKB"/>
</dbReference>
<dbReference type="GO" id="GO:0005829">
    <property type="term" value="C:cytosol"/>
    <property type="evidence" value="ECO:0007669"/>
    <property type="project" value="Ensembl"/>
</dbReference>
<dbReference type="GO" id="GO:0005654">
    <property type="term" value="C:nucleoplasm"/>
    <property type="evidence" value="ECO:0007669"/>
    <property type="project" value="Ensembl"/>
</dbReference>
<dbReference type="GO" id="GO:0046539">
    <property type="term" value="F:histamine N-methyltransferase activity"/>
    <property type="evidence" value="ECO:0000250"/>
    <property type="project" value="UniProtKB"/>
</dbReference>
<dbReference type="GO" id="GO:0001695">
    <property type="term" value="P:histamine catabolic process"/>
    <property type="evidence" value="ECO:0000250"/>
    <property type="project" value="UniProtKB"/>
</dbReference>
<dbReference type="GO" id="GO:0032259">
    <property type="term" value="P:methylation"/>
    <property type="evidence" value="ECO:0000250"/>
    <property type="project" value="UniProtKB"/>
</dbReference>
<dbReference type="CDD" id="cd02440">
    <property type="entry name" value="AdoMet_MTases"/>
    <property type="match status" value="1"/>
</dbReference>
<dbReference type="FunFam" id="3.40.50.150:FF:000118">
    <property type="entry name" value="Histamine N-methyltransferase"/>
    <property type="match status" value="1"/>
</dbReference>
<dbReference type="Gene3D" id="3.40.50.150">
    <property type="entry name" value="Vaccinia Virus protein VP39"/>
    <property type="match status" value="1"/>
</dbReference>
<dbReference type="InterPro" id="IPR016673">
    <property type="entry name" value="HHMT-like"/>
</dbReference>
<dbReference type="InterPro" id="IPR029063">
    <property type="entry name" value="SAM-dependent_MTases_sf"/>
</dbReference>
<dbReference type="Pfam" id="PF13489">
    <property type="entry name" value="Methyltransf_23"/>
    <property type="match status" value="1"/>
</dbReference>
<dbReference type="PIRSF" id="PIRSF016616">
    <property type="entry name" value="HHMT"/>
    <property type="match status" value="1"/>
</dbReference>
<dbReference type="SUPFAM" id="SSF53335">
    <property type="entry name" value="S-adenosyl-L-methionine-dependent methyltransferases"/>
    <property type="match status" value="1"/>
</dbReference>
<dbReference type="PROSITE" id="PS51597">
    <property type="entry name" value="SAM_HNMT"/>
    <property type="match status" value="1"/>
</dbReference>
<gene>
    <name type="primary">HNMT</name>
</gene>
<name>HNMT_CAVPO</name>
<protein>
    <recommendedName>
        <fullName>Histamine N-methyltransferase</fullName>
        <shortName>HMT</shortName>
        <ecNumber evidence="1">2.1.1.8</ecNumber>
    </recommendedName>
</protein>
<organism>
    <name type="scientific">Cavia porcellus</name>
    <name type="common">Guinea pig</name>
    <dbReference type="NCBI Taxonomy" id="10141"/>
    <lineage>
        <taxon>Eukaryota</taxon>
        <taxon>Metazoa</taxon>
        <taxon>Chordata</taxon>
        <taxon>Craniata</taxon>
        <taxon>Vertebrata</taxon>
        <taxon>Euteleostomi</taxon>
        <taxon>Mammalia</taxon>
        <taxon>Eutheria</taxon>
        <taxon>Euarchontoglires</taxon>
        <taxon>Glires</taxon>
        <taxon>Rodentia</taxon>
        <taxon>Hystricomorpha</taxon>
        <taxon>Caviidae</taxon>
        <taxon>Cavia</taxon>
    </lineage>
</organism>
<evidence type="ECO:0000250" key="1">
    <source>
        <dbReference type="UniProtKB" id="P50135"/>
    </source>
</evidence>
<evidence type="ECO:0000255" key="2">
    <source>
        <dbReference type="PROSITE-ProRule" id="PRU00929"/>
    </source>
</evidence>
<evidence type="ECO:0000269" key="3">
    <source>
    </source>
</evidence>